<name>CYSG2_AERS4</name>
<sequence length="480" mass="51976">MDYLPMFARLEGRPVLLVGGGEVALRKARLLLAAGARLTLVSPEIEPEFAEFAGRFTHLVERFTPAHLAGQLLVVAATDNLEVNALVYQSANQLGLFVNVVDDPKRSSFIFPSIIDRSPLMVAVSSGGKAPVLVRLLRERLESLLPRHLGGLTELSGRVRDKAKQVLSSISDRRRFWERAFASNTLAGLIEKQDWQSAETWLNDGLDKAQSEVGEVVLVGAGPGDPGLLTLKALQQIQQAEVVLYDQLVSPEILDLVRRDATLVSVGKKAGAHSVPQEETNRLLVEYARAGNRVVRLKGGDPFMFGCGGEELEVLAAEGIPFSVVPGITAAAGATAYAGIPLTHRDHAQSAVFITGHCQKEGKEPDWQQLAVTQQTLVIYMGLMRSEHIQQQLVSHGRSCTTPIAIIEWGTTARQRVLTGTLAELAVLAQQAVSPSLIVIGEVVSLRKQLAWFGEKSGEKRDVQAGTDMNGCDLKLVNLA</sequence>
<evidence type="ECO:0000255" key="1">
    <source>
        <dbReference type="HAMAP-Rule" id="MF_01646"/>
    </source>
</evidence>
<evidence type="ECO:0000305" key="2"/>
<feature type="chain" id="PRO_0000330490" description="Siroheme synthase 2">
    <location>
        <begin position="1"/>
        <end position="480"/>
    </location>
</feature>
<feature type="region of interest" description="Precorrin-2 dehydrogenase /sirohydrochlorin ferrochelatase" evidence="1">
    <location>
        <begin position="1"/>
        <end position="202"/>
    </location>
</feature>
<feature type="region of interest" description="Uroporphyrinogen-III C-methyltransferase" evidence="1">
    <location>
        <begin position="214"/>
        <end position="480"/>
    </location>
</feature>
<feature type="active site" description="Proton acceptor" evidence="1">
    <location>
        <position position="246"/>
    </location>
</feature>
<feature type="active site" description="Proton donor" evidence="1">
    <location>
        <position position="268"/>
    </location>
</feature>
<feature type="binding site" evidence="1">
    <location>
        <begin position="22"/>
        <end position="23"/>
    </location>
    <ligand>
        <name>NAD(+)</name>
        <dbReference type="ChEBI" id="CHEBI:57540"/>
    </ligand>
</feature>
<feature type="binding site" evidence="1">
    <location>
        <begin position="43"/>
        <end position="44"/>
    </location>
    <ligand>
        <name>NAD(+)</name>
        <dbReference type="ChEBI" id="CHEBI:57540"/>
    </ligand>
</feature>
<feature type="binding site" evidence="1">
    <location>
        <position position="223"/>
    </location>
    <ligand>
        <name>S-adenosyl-L-methionine</name>
        <dbReference type="ChEBI" id="CHEBI:59789"/>
    </ligand>
</feature>
<feature type="binding site" evidence="1">
    <location>
        <begin position="299"/>
        <end position="301"/>
    </location>
    <ligand>
        <name>S-adenosyl-L-methionine</name>
        <dbReference type="ChEBI" id="CHEBI:59789"/>
    </ligand>
</feature>
<feature type="binding site" evidence="1">
    <location>
        <begin position="329"/>
        <end position="330"/>
    </location>
    <ligand>
        <name>S-adenosyl-L-methionine</name>
        <dbReference type="ChEBI" id="CHEBI:59789"/>
    </ligand>
</feature>
<feature type="binding site" evidence="1">
    <location>
        <position position="381"/>
    </location>
    <ligand>
        <name>S-adenosyl-L-methionine</name>
        <dbReference type="ChEBI" id="CHEBI:59789"/>
    </ligand>
</feature>
<feature type="binding site" evidence="1">
    <location>
        <position position="410"/>
    </location>
    <ligand>
        <name>S-adenosyl-L-methionine</name>
        <dbReference type="ChEBI" id="CHEBI:59789"/>
    </ligand>
</feature>
<feature type="modified residue" description="Phosphoserine" evidence="1">
    <location>
        <position position="126"/>
    </location>
</feature>
<organism>
    <name type="scientific">Aeromonas salmonicida (strain A449)</name>
    <dbReference type="NCBI Taxonomy" id="382245"/>
    <lineage>
        <taxon>Bacteria</taxon>
        <taxon>Pseudomonadati</taxon>
        <taxon>Pseudomonadota</taxon>
        <taxon>Gammaproteobacteria</taxon>
        <taxon>Aeromonadales</taxon>
        <taxon>Aeromonadaceae</taxon>
        <taxon>Aeromonas</taxon>
    </lineage>
</organism>
<reference key="1">
    <citation type="journal article" date="2008" name="BMC Genomics">
        <title>The genome of Aeromonas salmonicida subsp. salmonicida A449: insights into the evolution of a fish pathogen.</title>
        <authorList>
            <person name="Reith M.E."/>
            <person name="Singh R.K."/>
            <person name="Curtis B."/>
            <person name="Boyd J.M."/>
            <person name="Bouevitch A."/>
            <person name="Kimball J."/>
            <person name="Munholland J."/>
            <person name="Murphy C."/>
            <person name="Sarty D."/>
            <person name="Williams J."/>
            <person name="Nash J.H."/>
            <person name="Johnson S.C."/>
            <person name="Brown L.L."/>
        </authorList>
    </citation>
    <scope>NUCLEOTIDE SEQUENCE [LARGE SCALE GENOMIC DNA]</scope>
    <source>
        <strain>A449</strain>
    </source>
</reference>
<keyword id="KW-0169">Cobalamin biosynthesis</keyword>
<keyword id="KW-0456">Lyase</keyword>
<keyword id="KW-0489">Methyltransferase</keyword>
<keyword id="KW-0511">Multifunctional enzyme</keyword>
<keyword id="KW-0520">NAD</keyword>
<keyword id="KW-0560">Oxidoreductase</keyword>
<keyword id="KW-0597">Phosphoprotein</keyword>
<keyword id="KW-0627">Porphyrin biosynthesis</keyword>
<keyword id="KW-0949">S-adenosyl-L-methionine</keyword>
<keyword id="KW-0808">Transferase</keyword>
<comment type="function">
    <text evidence="1">Multifunctional enzyme that catalyzes the SAM-dependent methylations of uroporphyrinogen III at position C-2 and C-7 to form precorrin-2 via precorrin-1. Then it catalyzes the NAD-dependent ring dehydrogenation of precorrin-2 to yield sirohydrochlorin. Finally, it catalyzes the ferrochelation of sirohydrochlorin to yield siroheme.</text>
</comment>
<comment type="catalytic activity">
    <reaction evidence="1">
        <text>uroporphyrinogen III + 2 S-adenosyl-L-methionine = precorrin-2 + 2 S-adenosyl-L-homocysteine + H(+)</text>
        <dbReference type="Rhea" id="RHEA:32459"/>
        <dbReference type="ChEBI" id="CHEBI:15378"/>
        <dbReference type="ChEBI" id="CHEBI:57308"/>
        <dbReference type="ChEBI" id="CHEBI:57856"/>
        <dbReference type="ChEBI" id="CHEBI:58827"/>
        <dbReference type="ChEBI" id="CHEBI:59789"/>
        <dbReference type="EC" id="2.1.1.107"/>
    </reaction>
</comment>
<comment type="catalytic activity">
    <reaction evidence="1">
        <text>precorrin-2 + NAD(+) = sirohydrochlorin + NADH + 2 H(+)</text>
        <dbReference type="Rhea" id="RHEA:15613"/>
        <dbReference type="ChEBI" id="CHEBI:15378"/>
        <dbReference type="ChEBI" id="CHEBI:57540"/>
        <dbReference type="ChEBI" id="CHEBI:57945"/>
        <dbReference type="ChEBI" id="CHEBI:58351"/>
        <dbReference type="ChEBI" id="CHEBI:58827"/>
        <dbReference type="EC" id="1.3.1.76"/>
    </reaction>
</comment>
<comment type="catalytic activity">
    <reaction evidence="1">
        <text>siroheme + 2 H(+) = sirohydrochlorin + Fe(2+)</text>
        <dbReference type="Rhea" id="RHEA:24360"/>
        <dbReference type="ChEBI" id="CHEBI:15378"/>
        <dbReference type="ChEBI" id="CHEBI:29033"/>
        <dbReference type="ChEBI" id="CHEBI:58351"/>
        <dbReference type="ChEBI" id="CHEBI:60052"/>
        <dbReference type="EC" id="4.99.1.4"/>
    </reaction>
</comment>
<comment type="pathway">
    <text evidence="1">Cofactor biosynthesis; adenosylcobalamin biosynthesis; precorrin-2 from uroporphyrinogen III: step 1/1.</text>
</comment>
<comment type="pathway">
    <text evidence="1">Cofactor biosynthesis; adenosylcobalamin biosynthesis; sirohydrochlorin from precorrin-2: step 1/1.</text>
</comment>
<comment type="pathway">
    <text evidence="1">Porphyrin-containing compound metabolism; siroheme biosynthesis; precorrin-2 from uroporphyrinogen III: step 1/1.</text>
</comment>
<comment type="pathway">
    <text evidence="1">Porphyrin-containing compound metabolism; siroheme biosynthesis; siroheme from sirohydrochlorin: step 1/1.</text>
</comment>
<comment type="pathway">
    <text evidence="1">Porphyrin-containing compound metabolism; siroheme biosynthesis; sirohydrochlorin from precorrin-2: step 1/1.</text>
</comment>
<comment type="similarity">
    <text evidence="1">In the N-terminal section; belongs to the precorrin-2 dehydrogenase / sirohydrochlorin ferrochelatase family.</text>
</comment>
<comment type="similarity">
    <text evidence="1">In the C-terminal section; belongs to the precorrin methyltransferase family.</text>
</comment>
<comment type="sequence caution" evidence="2">
    <conflict type="frameshift">
        <sequence resource="EMBL-CDS" id="ABO91492"/>
    </conflict>
</comment>
<gene>
    <name evidence="1" type="primary">cysG2</name>
    <name type="ordered locus">ASA_3524</name>
</gene>
<dbReference type="EC" id="2.1.1.107" evidence="1"/>
<dbReference type="EC" id="1.3.1.76" evidence="1"/>
<dbReference type="EC" id="4.99.1.4" evidence="1"/>
<dbReference type="EMBL" id="CP000644">
    <property type="protein sequence ID" value="ABO91492.1"/>
    <property type="status" value="ALT_FRAME"/>
    <property type="molecule type" value="Genomic_DNA"/>
</dbReference>
<dbReference type="SMR" id="A4SRH0"/>
<dbReference type="STRING" id="29491.GCA_000820065_04515"/>
<dbReference type="KEGG" id="asa:ASA_3524"/>
<dbReference type="eggNOG" id="COG0007">
    <property type="taxonomic scope" value="Bacteria"/>
</dbReference>
<dbReference type="eggNOG" id="COG1648">
    <property type="taxonomic scope" value="Bacteria"/>
</dbReference>
<dbReference type="HOGENOM" id="CLU_011276_2_0_6"/>
<dbReference type="UniPathway" id="UPA00148">
    <property type="reaction ID" value="UER00211"/>
</dbReference>
<dbReference type="UniPathway" id="UPA00148">
    <property type="reaction ID" value="UER00222"/>
</dbReference>
<dbReference type="UniPathway" id="UPA00262">
    <property type="reaction ID" value="UER00211"/>
</dbReference>
<dbReference type="UniPathway" id="UPA00262">
    <property type="reaction ID" value="UER00222"/>
</dbReference>
<dbReference type="UniPathway" id="UPA00262">
    <property type="reaction ID" value="UER00376"/>
</dbReference>
<dbReference type="Proteomes" id="UP000000225">
    <property type="component" value="Chromosome"/>
</dbReference>
<dbReference type="GO" id="GO:0051287">
    <property type="term" value="F:NAD binding"/>
    <property type="evidence" value="ECO:0007669"/>
    <property type="project" value="InterPro"/>
</dbReference>
<dbReference type="GO" id="GO:0043115">
    <property type="term" value="F:precorrin-2 dehydrogenase activity"/>
    <property type="evidence" value="ECO:0007669"/>
    <property type="project" value="UniProtKB-UniRule"/>
</dbReference>
<dbReference type="GO" id="GO:0051266">
    <property type="term" value="F:sirohydrochlorin ferrochelatase activity"/>
    <property type="evidence" value="ECO:0007669"/>
    <property type="project" value="UniProtKB-EC"/>
</dbReference>
<dbReference type="GO" id="GO:0004851">
    <property type="term" value="F:uroporphyrin-III C-methyltransferase activity"/>
    <property type="evidence" value="ECO:0007669"/>
    <property type="project" value="UniProtKB-UniRule"/>
</dbReference>
<dbReference type="GO" id="GO:0009236">
    <property type="term" value="P:cobalamin biosynthetic process"/>
    <property type="evidence" value="ECO:0007669"/>
    <property type="project" value="UniProtKB-UniRule"/>
</dbReference>
<dbReference type="GO" id="GO:0032259">
    <property type="term" value="P:methylation"/>
    <property type="evidence" value="ECO:0007669"/>
    <property type="project" value="UniProtKB-KW"/>
</dbReference>
<dbReference type="GO" id="GO:0019354">
    <property type="term" value="P:siroheme biosynthetic process"/>
    <property type="evidence" value="ECO:0007669"/>
    <property type="project" value="UniProtKB-UniRule"/>
</dbReference>
<dbReference type="CDD" id="cd11642">
    <property type="entry name" value="SUMT"/>
    <property type="match status" value="1"/>
</dbReference>
<dbReference type="FunFam" id="3.30.160.110:FF:000001">
    <property type="entry name" value="Siroheme synthase"/>
    <property type="match status" value="1"/>
</dbReference>
<dbReference type="FunFam" id="3.30.950.10:FF:000001">
    <property type="entry name" value="Siroheme synthase"/>
    <property type="match status" value="1"/>
</dbReference>
<dbReference type="FunFam" id="3.40.1010.10:FF:000001">
    <property type="entry name" value="Siroheme synthase"/>
    <property type="match status" value="1"/>
</dbReference>
<dbReference type="Gene3D" id="3.40.1010.10">
    <property type="entry name" value="Cobalt-precorrin-4 Transmethylase, Domain 1"/>
    <property type="match status" value="1"/>
</dbReference>
<dbReference type="Gene3D" id="3.30.950.10">
    <property type="entry name" value="Methyltransferase, Cobalt-precorrin-4 Transmethylase, Domain 2"/>
    <property type="match status" value="1"/>
</dbReference>
<dbReference type="Gene3D" id="3.40.50.720">
    <property type="entry name" value="NAD(P)-binding Rossmann-like Domain"/>
    <property type="match status" value="1"/>
</dbReference>
<dbReference type="Gene3D" id="1.10.8.210">
    <property type="entry name" value="Sirohaem synthase, dimerisation domain"/>
    <property type="match status" value="1"/>
</dbReference>
<dbReference type="Gene3D" id="3.30.160.110">
    <property type="entry name" value="Siroheme synthase, domain 2"/>
    <property type="match status" value="1"/>
</dbReference>
<dbReference type="HAMAP" id="MF_01646">
    <property type="entry name" value="Siroheme_synth"/>
    <property type="match status" value="1"/>
</dbReference>
<dbReference type="InterPro" id="IPR000878">
    <property type="entry name" value="4pyrrol_Mease"/>
</dbReference>
<dbReference type="InterPro" id="IPR035996">
    <property type="entry name" value="4pyrrol_Methylase_sf"/>
</dbReference>
<dbReference type="InterPro" id="IPR014777">
    <property type="entry name" value="4pyrrole_Mease_sub1"/>
</dbReference>
<dbReference type="InterPro" id="IPR014776">
    <property type="entry name" value="4pyrrole_Mease_sub2"/>
</dbReference>
<dbReference type="InterPro" id="IPR006366">
    <property type="entry name" value="CobA/CysG_C"/>
</dbReference>
<dbReference type="InterPro" id="IPR036291">
    <property type="entry name" value="NAD(P)-bd_dom_sf"/>
</dbReference>
<dbReference type="InterPro" id="IPR050161">
    <property type="entry name" value="Siro_Cobalamin_biosynth"/>
</dbReference>
<dbReference type="InterPro" id="IPR037115">
    <property type="entry name" value="Sirohaem_synt_dimer_dom_sf"/>
</dbReference>
<dbReference type="InterPro" id="IPR012409">
    <property type="entry name" value="Sirohaem_synth"/>
</dbReference>
<dbReference type="InterPro" id="IPR028281">
    <property type="entry name" value="Sirohaem_synthase_central"/>
</dbReference>
<dbReference type="InterPro" id="IPR019478">
    <property type="entry name" value="Sirohaem_synthase_dimer_dom"/>
</dbReference>
<dbReference type="InterPro" id="IPR006367">
    <property type="entry name" value="Sirohaem_synthase_N"/>
</dbReference>
<dbReference type="InterPro" id="IPR003043">
    <property type="entry name" value="Uropor_MeTrfase_CS"/>
</dbReference>
<dbReference type="NCBIfam" id="TIGR01469">
    <property type="entry name" value="cobA_cysG_Cterm"/>
    <property type="match status" value="1"/>
</dbReference>
<dbReference type="NCBIfam" id="TIGR01470">
    <property type="entry name" value="cysG_Nterm"/>
    <property type="match status" value="1"/>
</dbReference>
<dbReference type="NCBIfam" id="NF004790">
    <property type="entry name" value="PRK06136.1"/>
    <property type="match status" value="1"/>
</dbReference>
<dbReference type="NCBIfam" id="NF007922">
    <property type="entry name" value="PRK10637.1"/>
    <property type="match status" value="1"/>
</dbReference>
<dbReference type="PANTHER" id="PTHR45790:SF1">
    <property type="entry name" value="SIROHEME SYNTHASE"/>
    <property type="match status" value="1"/>
</dbReference>
<dbReference type="PANTHER" id="PTHR45790">
    <property type="entry name" value="SIROHEME SYNTHASE-RELATED"/>
    <property type="match status" value="1"/>
</dbReference>
<dbReference type="Pfam" id="PF10414">
    <property type="entry name" value="CysG_dimeriser"/>
    <property type="match status" value="1"/>
</dbReference>
<dbReference type="Pfam" id="PF13241">
    <property type="entry name" value="NAD_binding_7"/>
    <property type="match status" value="1"/>
</dbReference>
<dbReference type="Pfam" id="PF14824">
    <property type="entry name" value="Sirohm_synth_M"/>
    <property type="match status" value="1"/>
</dbReference>
<dbReference type="Pfam" id="PF00590">
    <property type="entry name" value="TP_methylase"/>
    <property type="match status" value="1"/>
</dbReference>
<dbReference type="PIRSF" id="PIRSF036426">
    <property type="entry name" value="Sirohaem_synth"/>
    <property type="match status" value="1"/>
</dbReference>
<dbReference type="SUPFAM" id="SSF51735">
    <property type="entry name" value="NAD(P)-binding Rossmann-fold domains"/>
    <property type="match status" value="1"/>
</dbReference>
<dbReference type="SUPFAM" id="SSF75615">
    <property type="entry name" value="Siroheme synthase middle domains-like"/>
    <property type="match status" value="1"/>
</dbReference>
<dbReference type="SUPFAM" id="SSF53790">
    <property type="entry name" value="Tetrapyrrole methylase"/>
    <property type="match status" value="1"/>
</dbReference>
<dbReference type="PROSITE" id="PS00839">
    <property type="entry name" value="SUMT_1"/>
    <property type="match status" value="1"/>
</dbReference>
<dbReference type="PROSITE" id="PS00840">
    <property type="entry name" value="SUMT_2"/>
    <property type="match status" value="1"/>
</dbReference>
<accession>A4SRH0</accession>
<protein>
    <recommendedName>
        <fullName evidence="1">Siroheme synthase 2</fullName>
    </recommendedName>
    <domain>
        <recommendedName>
            <fullName evidence="1">Uroporphyrinogen-III C-methyltransferase 2</fullName>
            <shortName evidence="1">Urogen III methylase 2</shortName>
            <ecNumber evidence="1">2.1.1.107</ecNumber>
        </recommendedName>
        <alternativeName>
            <fullName evidence="1">SUMT 2</fullName>
        </alternativeName>
        <alternativeName>
            <fullName evidence="1">Uroporphyrinogen III methylase 2</fullName>
            <shortName evidence="1">UROM 2</shortName>
        </alternativeName>
    </domain>
    <domain>
        <recommendedName>
            <fullName evidence="1">Precorrin-2 dehydrogenase 2</fullName>
            <ecNumber evidence="1">1.3.1.76</ecNumber>
        </recommendedName>
    </domain>
    <domain>
        <recommendedName>
            <fullName evidence="1">Sirohydrochlorin ferrochelatase 2</fullName>
            <ecNumber evidence="1">4.99.1.4</ecNumber>
        </recommendedName>
    </domain>
</protein>
<proteinExistence type="inferred from homology"/>